<feature type="chain" id="PRO_0000269747" description="Probable histone acetyltransferase HAC-like 3">
    <location>
        <begin position="1"/>
        <end position="1276"/>
    </location>
</feature>
<feature type="domain" description="CBP/p300-type HAT" evidence="6">
    <location>
        <begin position="704"/>
        <end position="1130"/>
    </location>
</feature>
<feature type="zinc finger region" description="PHD-type">
    <location>
        <begin position="621"/>
        <end position="689"/>
    </location>
</feature>
<feature type="zinc finger region" description="ZZ-type 1" evidence="5">
    <location>
        <begin position="1013"/>
        <end position="1076"/>
    </location>
</feature>
<feature type="zinc finger region" description="ZZ-type 2" evidence="5">
    <location>
        <begin position="1125"/>
        <end position="1187"/>
    </location>
</feature>
<feature type="zinc finger region" description="TAZ-type" evidence="4">
    <location>
        <begin position="1177"/>
        <end position="1260"/>
    </location>
</feature>
<feature type="region of interest" description="Disordered" evidence="7">
    <location>
        <begin position="391"/>
        <end position="421"/>
    </location>
</feature>
<feature type="coiled-coil region" evidence="3">
    <location>
        <begin position="953"/>
        <end position="973"/>
    </location>
</feature>
<feature type="compositionally biased region" description="Polar residues" evidence="7">
    <location>
        <begin position="396"/>
        <end position="413"/>
    </location>
</feature>
<feature type="binding site" evidence="1">
    <location>
        <begin position="827"/>
        <end position="829"/>
    </location>
    <ligand>
        <name>acetyl-CoA</name>
        <dbReference type="ChEBI" id="CHEBI:57288"/>
    </ligand>
</feature>
<feature type="binding site" evidence="1">
    <location>
        <begin position="846"/>
        <end position="847"/>
    </location>
    <ligand>
        <name>acetyl-CoA</name>
        <dbReference type="ChEBI" id="CHEBI:57288"/>
    </ligand>
</feature>
<feature type="binding site" evidence="1">
    <location>
        <position position="902"/>
    </location>
    <ligand>
        <name>acetyl-CoA</name>
        <dbReference type="ChEBI" id="CHEBI:57288"/>
    </ligand>
</feature>
<feature type="binding site" evidence="5">
    <location>
        <position position="1018"/>
    </location>
    <ligand>
        <name>Zn(2+)</name>
        <dbReference type="ChEBI" id="CHEBI:29105"/>
        <label>1</label>
    </ligand>
</feature>
<feature type="binding site" evidence="5">
    <location>
        <position position="1021"/>
    </location>
    <ligand>
        <name>Zn(2+)</name>
        <dbReference type="ChEBI" id="CHEBI:29105"/>
        <label>1</label>
    </ligand>
</feature>
<feature type="binding site" evidence="5">
    <location>
        <position position="1033"/>
    </location>
    <ligand>
        <name>Zn(2+)</name>
        <dbReference type="ChEBI" id="CHEBI:29105"/>
        <label>2</label>
    </ligand>
</feature>
<feature type="binding site" evidence="5">
    <location>
        <position position="1036"/>
    </location>
    <ligand>
        <name>Zn(2+)</name>
        <dbReference type="ChEBI" id="CHEBI:29105"/>
        <label>2</label>
    </ligand>
</feature>
<feature type="binding site" evidence="5">
    <location>
        <position position="1042"/>
    </location>
    <ligand>
        <name>Zn(2+)</name>
        <dbReference type="ChEBI" id="CHEBI:29105"/>
        <label>1</label>
    </ligand>
</feature>
<feature type="binding site" evidence="5">
    <location>
        <position position="1045"/>
    </location>
    <ligand>
        <name>Zn(2+)</name>
        <dbReference type="ChEBI" id="CHEBI:29105"/>
        <label>1</label>
    </ligand>
</feature>
<feature type="binding site" evidence="5">
    <location>
        <position position="1058"/>
    </location>
    <ligand>
        <name>Zn(2+)</name>
        <dbReference type="ChEBI" id="CHEBI:29105"/>
        <label>2</label>
    </ligand>
</feature>
<feature type="binding site" evidence="5">
    <location>
        <position position="1066"/>
    </location>
    <ligand>
        <name>Zn(2+)</name>
        <dbReference type="ChEBI" id="CHEBI:29105"/>
        <label>2</label>
    </ligand>
</feature>
<feature type="binding site" evidence="5">
    <location>
        <position position="1130"/>
    </location>
    <ligand>
        <name>Zn(2+)</name>
        <dbReference type="ChEBI" id="CHEBI:29105"/>
        <label>3</label>
    </ligand>
</feature>
<feature type="binding site" evidence="5">
    <location>
        <position position="1133"/>
    </location>
    <ligand>
        <name>Zn(2+)</name>
        <dbReference type="ChEBI" id="CHEBI:29105"/>
        <label>3</label>
    </ligand>
</feature>
<feature type="binding site" evidence="5">
    <location>
        <position position="1145"/>
    </location>
    <ligand>
        <name>Zn(2+)</name>
        <dbReference type="ChEBI" id="CHEBI:29105"/>
        <label>4</label>
    </ligand>
</feature>
<feature type="binding site" evidence="5">
    <location>
        <position position="1148"/>
    </location>
    <ligand>
        <name>Zn(2+)</name>
        <dbReference type="ChEBI" id="CHEBI:29105"/>
        <label>4</label>
    </ligand>
</feature>
<feature type="binding site" evidence="5">
    <location>
        <position position="1154"/>
    </location>
    <ligand>
        <name>Zn(2+)</name>
        <dbReference type="ChEBI" id="CHEBI:29105"/>
        <label>3</label>
    </ligand>
</feature>
<feature type="binding site" evidence="5">
    <location>
        <position position="1157"/>
    </location>
    <ligand>
        <name>Zn(2+)</name>
        <dbReference type="ChEBI" id="CHEBI:29105"/>
        <label>3</label>
    </ligand>
</feature>
<feature type="binding site" evidence="5">
    <location>
        <position position="1168"/>
    </location>
    <ligand>
        <name>Zn(2+)</name>
        <dbReference type="ChEBI" id="CHEBI:29105"/>
        <label>4</label>
    </ligand>
</feature>
<feature type="binding site" evidence="5">
    <location>
        <position position="1177"/>
    </location>
    <ligand>
        <name>Zn(2+)</name>
        <dbReference type="ChEBI" id="CHEBI:29105"/>
        <label>4</label>
    </ligand>
</feature>
<feature type="sequence conflict" description="In Ref. 2." evidence="8" ref="2">
    <original>P</original>
    <variation>Q</variation>
    <location>
        <position position="468"/>
    </location>
</feature>
<evidence type="ECO:0000250" key="1">
    <source>
        <dbReference type="UniProtKB" id="Q09472"/>
    </source>
</evidence>
<evidence type="ECO:0000250" key="2">
    <source>
        <dbReference type="UniProtKB" id="Q9C5X9"/>
    </source>
</evidence>
<evidence type="ECO:0000255" key="3"/>
<evidence type="ECO:0000255" key="4">
    <source>
        <dbReference type="PROSITE-ProRule" id="PRU00203"/>
    </source>
</evidence>
<evidence type="ECO:0000255" key="5">
    <source>
        <dbReference type="PROSITE-ProRule" id="PRU00228"/>
    </source>
</evidence>
<evidence type="ECO:0000255" key="6">
    <source>
        <dbReference type="PROSITE-ProRule" id="PRU01065"/>
    </source>
</evidence>
<evidence type="ECO:0000256" key="7">
    <source>
        <dbReference type="SAM" id="MobiDB-lite"/>
    </source>
</evidence>
<evidence type="ECO:0000305" key="8"/>
<proteinExistence type="evidence at transcript level"/>
<reference key="1">
    <citation type="journal article" date="2002" name="Nature">
        <title>The genome sequence and structure of rice chromosome 1.</title>
        <authorList>
            <person name="Sasaki T."/>
            <person name="Matsumoto T."/>
            <person name="Yamamoto K."/>
            <person name="Sakata K."/>
            <person name="Baba T."/>
            <person name="Katayose Y."/>
            <person name="Wu J."/>
            <person name="Niimura Y."/>
            <person name="Cheng Z."/>
            <person name="Nagamura Y."/>
            <person name="Antonio B.A."/>
            <person name="Kanamori H."/>
            <person name="Hosokawa S."/>
            <person name="Masukawa M."/>
            <person name="Arikawa K."/>
            <person name="Chiden Y."/>
            <person name="Hayashi M."/>
            <person name="Okamoto M."/>
            <person name="Ando T."/>
            <person name="Aoki H."/>
            <person name="Arita K."/>
            <person name="Hamada M."/>
            <person name="Harada C."/>
            <person name="Hijishita S."/>
            <person name="Honda M."/>
            <person name="Ichikawa Y."/>
            <person name="Idonuma A."/>
            <person name="Iijima M."/>
            <person name="Ikeda M."/>
            <person name="Ikeno M."/>
            <person name="Ito S."/>
            <person name="Ito T."/>
            <person name="Ito Y."/>
            <person name="Ito Y."/>
            <person name="Iwabuchi A."/>
            <person name="Kamiya K."/>
            <person name="Karasawa W."/>
            <person name="Katagiri S."/>
            <person name="Kikuta A."/>
            <person name="Kobayashi N."/>
            <person name="Kono I."/>
            <person name="Machita K."/>
            <person name="Maehara T."/>
            <person name="Mizuno H."/>
            <person name="Mizubayashi T."/>
            <person name="Mukai Y."/>
            <person name="Nagasaki H."/>
            <person name="Nakashima M."/>
            <person name="Nakama Y."/>
            <person name="Nakamichi Y."/>
            <person name="Nakamura M."/>
            <person name="Namiki N."/>
            <person name="Negishi M."/>
            <person name="Ohta I."/>
            <person name="Ono N."/>
            <person name="Saji S."/>
            <person name="Sakai K."/>
            <person name="Shibata M."/>
            <person name="Shimokawa T."/>
            <person name="Shomura A."/>
            <person name="Song J."/>
            <person name="Takazaki Y."/>
            <person name="Terasawa K."/>
            <person name="Tsuji K."/>
            <person name="Waki K."/>
            <person name="Yamagata H."/>
            <person name="Yamane H."/>
            <person name="Yoshiki S."/>
            <person name="Yoshihara R."/>
            <person name="Yukawa K."/>
            <person name="Zhong H."/>
            <person name="Iwama H."/>
            <person name="Endo T."/>
            <person name="Ito H."/>
            <person name="Hahn J.H."/>
            <person name="Kim H.-I."/>
            <person name="Eun M.-Y."/>
            <person name="Yano M."/>
            <person name="Jiang J."/>
            <person name="Gojobori T."/>
        </authorList>
    </citation>
    <scope>NUCLEOTIDE SEQUENCE [LARGE SCALE GENOMIC DNA]</scope>
    <source>
        <strain>cv. Nipponbare</strain>
    </source>
</reference>
<reference key="2">
    <citation type="journal article" date="2005" name="Nature">
        <title>The map-based sequence of the rice genome.</title>
        <authorList>
            <consortium name="International rice genome sequencing project (IRGSP)"/>
        </authorList>
    </citation>
    <scope>NUCLEOTIDE SEQUENCE [LARGE SCALE GENOMIC DNA]</scope>
    <source>
        <strain>cv. Nipponbare</strain>
    </source>
</reference>
<reference key="3">
    <citation type="journal article" date="2008" name="Nucleic Acids Res.">
        <title>The rice annotation project database (RAP-DB): 2008 update.</title>
        <authorList>
            <consortium name="The rice annotation project (RAP)"/>
        </authorList>
    </citation>
    <scope>GENOME REANNOTATION</scope>
    <source>
        <strain>cv. Nipponbare</strain>
    </source>
</reference>
<reference key="4">
    <citation type="journal article" date="2013" name="Rice">
        <title>Improvement of the Oryza sativa Nipponbare reference genome using next generation sequence and optical map data.</title>
        <authorList>
            <person name="Kawahara Y."/>
            <person name="de la Bastide M."/>
            <person name="Hamilton J.P."/>
            <person name="Kanamori H."/>
            <person name="McCombie W.R."/>
            <person name="Ouyang S."/>
            <person name="Schwartz D.C."/>
            <person name="Tanaka T."/>
            <person name="Wu J."/>
            <person name="Zhou S."/>
            <person name="Childs K.L."/>
            <person name="Davidson R.M."/>
            <person name="Lin H."/>
            <person name="Quesada-Ocampo L."/>
            <person name="Vaillancourt B."/>
            <person name="Sakai H."/>
            <person name="Lee S.S."/>
            <person name="Kim J."/>
            <person name="Numa H."/>
            <person name="Itoh T."/>
            <person name="Buell C.R."/>
            <person name="Matsumoto T."/>
        </authorList>
    </citation>
    <scope>GENOME REANNOTATION</scope>
    <source>
        <strain>cv. Nipponbare</strain>
    </source>
</reference>
<reference key="5">
    <citation type="journal article" date="2003" name="Science">
        <title>Collection, mapping, and annotation of over 28,000 cDNA clones from japonica rice.</title>
        <authorList>
            <consortium name="The rice full-length cDNA consortium"/>
        </authorList>
    </citation>
    <scope>NUCLEOTIDE SEQUENCE [LARGE SCALE MRNA]</scope>
    <source>
        <strain>cv. Nipponbare</strain>
    </source>
</reference>
<sequence length="1276" mass="145098">MMAKTLQGTQQQYAASGFPTQQYPTSGWTQSAAEILQLDNMDQDTSVVRNIIHRKIVEYLNERKEFCNFDLSFLMEIGKCIDRHLFEKADSKIKYMDLETLRTRLNAIVNSASFRGSMFHWSASAASSKLNSQQLPVMEVPIYHDRVTPGPNNLPSCAYNVSSTQGYNQYENCMGAANFAHSLADKPKQMPERLANTIFTSCASTLPKCSPSIDVLHIGHIKEHFSGDAYQNDSSQPSTSGSSSSLSAVWDQTTCSSAMRTLPMDSFSTVNGQNLSTNNKSLYPTTGQGPLLQQYIECEMKQETWSRSLEQSDQSNITTGNRDLYHAQIHPYINGEHKRDRCIQMKEKLGHTSDHEGFSREKSSNLSNHFMHHQQGFMTNYGACSPVSKTVDRAEQTSNSTVSKPTSPASDGSSGKHYPAKRLKVDVPHLVHVNEMEASKEQQPAANETYASAETVQSEVTNSPTKSPCCTSLGDNIACTDNVHGMDMVRLSGSAVQTEEEFRRENSDIEMKDAKVDLLDQTLSGDSLRARKRRGASVLYALTSEELKDHLCTLNHDTSQSKVPTEELLSVEGLPDQNTCNLCGMERLLFEPPPRFCALCFKIINSTGSYYVEVENGNDKSSICGRCHHLSSAKAKYQKRFSYAETDAEAEWWVQCDKCKAWQHQICALFNPKIVDPEAEYTCAKCFLKEKDNEDVDSLEPSTILGARELPRTRLSDHIEQRLSERLVQERQQRAIASGKSVDEVPGVEGLTVRVVSSADRTLQVQPRFKDFFKKEQYPGEFPYKSKAILLFQKNEGVDVCLFAMYVQEYGSACPSPNQRHVYLAYIDSVKYFRPEIKSASGEALRTFVYHEILIGYLDFCKKRGFVSCSIWTCPSTKRDDYVLYCHPTIQKMPKSDKLRSWYQNLVKKAVKEGVVVERNTLYDFFLQPTNECKTNISAAWLPYCDNDFWPGEAERLLEKKDDDTSQKKETQLGRLLRVAKRDDRKGNLEDILLVHKLGERLRTMKEDFLMLCLQQFCKHCHHPIVSGSSWVCTSCKNFFLCERCYAEELNTPLKDRHPATTKQKHAFERIEEEPLPETDDVDPTMESKYFDSRIDFLKHCQDNQYQFDTLRRAKHSTMMILYHLHDSTCSSCHRAMDQCLAWRCLVCLGCNFCDSCYKQDGESLHIHKLRQKKDHHVLQKYTLQDYLEGLVHASRCFDRSCTSKLCLTLKKLFFHGVRCHTRARGGGGCHMCVFMWKLLFTHSLLCDNADCSAPRCRDIKAYIADRSMTDLSISG</sequence>
<gene>
    <name type="ordered locus">Os01g0246100</name>
    <name type="ordered locus">LOC_Os01g14370</name>
    <name type="ORF">OSJNBa0004G10.16</name>
    <name type="ORF">OSJNBa0049B20.5</name>
</gene>
<name>HACL3_ORYSJ</name>
<keyword id="KW-0010">Activator</keyword>
<keyword id="KW-0012">Acyltransferase</keyword>
<keyword id="KW-0156">Chromatin regulator</keyword>
<keyword id="KW-0175">Coiled coil</keyword>
<keyword id="KW-0479">Metal-binding</keyword>
<keyword id="KW-0539">Nucleus</keyword>
<keyword id="KW-1185">Reference proteome</keyword>
<keyword id="KW-0677">Repeat</keyword>
<keyword id="KW-0804">Transcription</keyword>
<keyword id="KW-0805">Transcription regulation</keyword>
<keyword id="KW-0808">Transferase</keyword>
<keyword id="KW-0862">Zinc</keyword>
<keyword id="KW-0863">Zinc-finger</keyword>
<protein>
    <recommendedName>
        <fullName>Probable histone acetyltransferase HAC-like 3</fullName>
        <ecNumber evidence="2">2.3.1.48</ecNumber>
    </recommendedName>
</protein>
<dbReference type="EC" id="2.3.1.48" evidence="2"/>
<dbReference type="EMBL" id="AC007789">
    <property type="protein sequence ID" value="AAD38279.1"/>
    <property type="status" value="ALT_SEQ"/>
    <property type="molecule type" value="Genomic_DNA"/>
</dbReference>
<dbReference type="EMBL" id="AP003074">
    <property type="protein sequence ID" value="BAE95818.1"/>
    <property type="status" value="ALT_INIT"/>
    <property type="molecule type" value="Genomic_DNA"/>
</dbReference>
<dbReference type="EMBL" id="AP008207">
    <property type="protein sequence ID" value="BAF04486.1"/>
    <property type="molecule type" value="Genomic_DNA"/>
</dbReference>
<dbReference type="EMBL" id="AP014957">
    <property type="protein sequence ID" value="BAS71309.1"/>
    <property type="molecule type" value="Genomic_DNA"/>
</dbReference>
<dbReference type="EMBL" id="AK120732">
    <property type="status" value="NOT_ANNOTATED_CDS"/>
    <property type="molecule type" value="mRNA"/>
</dbReference>
<dbReference type="RefSeq" id="XP_015621172.1">
    <property type="nucleotide sequence ID" value="XM_015765686.1"/>
</dbReference>
<dbReference type="SMR" id="Q9XHY7"/>
<dbReference type="STRING" id="39947.Q9XHY7"/>
<dbReference type="PaxDb" id="39947-Q9XHY7"/>
<dbReference type="EnsemblPlants" id="Os01t0246100-01">
    <property type="protein sequence ID" value="Os01t0246100-01"/>
    <property type="gene ID" value="Os01g0246100"/>
</dbReference>
<dbReference type="Gramene" id="Os01t0246100-01">
    <property type="protein sequence ID" value="Os01t0246100-01"/>
    <property type="gene ID" value="Os01g0246100"/>
</dbReference>
<dbReference type="KEGG" id="dosa:Os01g0246100"/>
<dbReference type="eggNOG" id="KOG1778">
    <property type="taxonomic scope" value="Eukaryota"/>
</dbReference>
<dbReference type="HOGENOM" id="CLU_002956_2_1_1"/>
<dbReference type="InParanoid" id="Q9XHY7"/>
<dbReference type="OMA" id="CERCYAE"/>
<dbReference type="OrthoDB" id="899at2759"/>
<dbReference type="Proteomes" id="UP000000763">
    <property type="component" value="Chromosome 1"/>
</dbReference>
<dbReference type="Proteomes" id="UP000059680">
    <property type="component" value="Chromosome 1"/>
</dbReference>
<dbReference type="GO" id="GO:0000123">
    <property type="term" value="C:histone acetyltransferase complex"/>
    <property type="evidence" value="ECO:0000318"/>
    <property type="project" value="GO_Central"/>
</dbReference>
<dbReference type="GO" id="GO:0005634">
    <property type="term" value="C:nucleus"/>
    <property type="evidence" value="ECO:0007669"/>
    <property type="project" value="UniProtKB-SubCell"/>
</dbReference>
<dbReference type="GO" id="GO:0005667">
    <property type="term" value="C:transcription regulator complex"/>
    <property type="evidence" value="ECO:0000318"/>
    <property type="project" value="GO_Central"/>
</dbReference>
<dbReference type="GO" id="GO:0031490">
    <property type="term" value="F:chromatin DNA binding"/>
    <property type="evidence" value="ECO:0000318"/>
    <property type="project" value="GO_Central"/>
</dbReference>
<dbReference type="GO" id="GO:0004402">
    <property type="term" value="F:histone acetyltransferase activity"/>
    <property type="evidence" value="ECO:0000318"/>
    <property type="project" value="GO_Central"/>
</dbReference>
<dbReference type="GO" id="GO:0003713">
    <property type="term" value="F:transcription coactivator activity"/>
    <property type="evidence" value="ECO:0000318"/>
    <property type="project" value="GO_Central"/>
</dbReference>
<dbReference type="GO" id="GO:0008270">
    <property type="term" value="F:zinc ion binding"/>
    <property type="evidence" value="ECO:0007669"/>
    <property type="project" value="UniProtKB-KW"/>
</dbReference>
<dbReference type="GO" id="GO:0045944">
    <property type="term" value="P:positive regulation of transcription by RNA polymerase II"/>
    <property type="evidence" value="ECO:0000318"/>
    <property type="project" value="GO_Central"/>
</dbReference>
<dbReference type="Gene3D" id="3.30.60.90">
    <property type="match status" value="1"/>
</dbReference>
<dbReference type="Gene3D" id="1.20.1020.10">
    <property type="entry name" value="TAZ domain"/>
    <property type="match status" value="1"/>
</dbReference>
<dbReference type="Gene3D" id="3.30.40.10">
    <property type="entry name" value="Zinc/RING finger domain, C3HC4 (zinc finger)"/>
    <property type="match status" value="1"/>
</dbReference>
<dbReference type="InterPro" id="IPR031162">
    <property type="entry name" value="CBP_P300_HAT"/>
</dbReference>
<dbReference type="InterPro" id="IPR013178">
    <property type="entry name" value="Histone_AcTrfase_Rtt109/CBP"/>
</dbReference>
<dbReference type="InterPro" id="IPR035898">
    <property type="entry name" value="TAZ_dom_sf"/>
</dbReference>
<dbReference type="InterPro" id="IPR019786">
    <property type="entry name" value="Zinc_finger_PHD-type_CS"/>
</dbReference>
<dbReference type="InterPro" id="IPR011011">
    <property type="entry name" value="Znf_FYVE_PHD"/>
</dbReference>
<dbReference type="InterPro" id="IPR001965">
    <property type="entry name" value="Znf_PHD"/>
</dbReference>
<dbReference type="InterPro" id="IPR019787">
    <property type="entry name" value="Znf_PHD-finger"/>
</dbReference>
<dbReference type="InterPro" id="IPR013083">
    <property type="entry name" value="Znf_RING/FYVE/PHD"/>
</dbReference>
<dbReference type="InterPro" id="IPR000197">
    <property type="entry name" value="Znf_TAZ"/>
</dbReference>
<dbReference type="InterPro" id="IPR000433">
    <property type="entry name" value="Znf_ZZ"/>
</dbReference>
<dbReference type="InterPro" id="IPR043145">
    <property type="entry name" value="Znf_ZZ_sf"/>
</dbReference>
<dbReference type="PANTHER" id="PTHR13808">
    <property type="entry name" value="CBP/P300-RELATED"/>
    <property type="match status" value="1"/>
</dbReference>
<dbReference type="PANTHER" id="PTHR13808:SF39">
    <property type="entry name" value="HISTONE ACETYLTRANSFERASE HAC-LIKE 3-RELATED"/>
    <property type="match status" value="1"/>
</dbReference>
<dbReference type="Pfam" id="PF08214">
    <property type="entry name" value="HAT_KAT11"/>
    <property type="match status" value="1"/>
</dbReference>
<dbReference type="Pfam" id="PF00628">
    <property type="entry name" value="PHD"/>
    <property type="match status" value="1"/>
</dbReference>
<dbReference type="Pfam" id="PF02135">
    <property type="entry name" value="zf-TAZ"/>
    <property type="match status" value="1"/>
</dbReference>
<dbReference type="SMART" id="SM01250">
    <property type="entry name" value="KAT11"/>
    <property type="match status" value="1"/>
</dbReference>
<dbReference type="SMART" id="SM00249">
    <property type="entry name" value="PHD"/>
    <property type="match status" value="1"/>
</dbReference>
<dbReference type="SMART" id="SM00551">
    <property type="entry name" value="ZnF_TAZ"/>
    <property type="match status" value="1"/>
</dbReference>
<dbReference type="SUPFAM" id="SSF57903">
    <property type="entry name" value="FYVE/PHD zinc finger"/>
    <property type="match status" value="1"/>
</dbReference>
<dbReference type="SUPFAM" id="SSF57850">
    <property type="entry name" value="RING/U-box"/>
    <property type="match status" value="2"/>
</dbReference>
<dbReference type="SUPFAM" id="SSF57933">
    <property type="entry name" value="TAZ domain"/>
    <property type="match status" value="1"/>
</dbReference>
<dbReference type="PROSITE" id="PS51727">
    <property type="entry name" value="CBP_P300_HAT"/>
    <property type="match status" value="1"/>
</dbReference>
<dbReference type="PROSITE" id="PS01359">
    <property type="entry name" value="ZF_PHD_1"/>
    <property type="match status" value="1"/>
</dbReference>
<dbReference type="PROSITE" id="PS50134">
    <property type="entry name" value="ZF_TAZ"/>
    <property type="match status" value="1"/>
</dbReference>
<dbReference type="PROSITE" id="PS01357">
    <property type="entry name" value="ZF_ZZ_1"/>
    <property type="match status" value="1"/>
</dbReference>
<dbReference type="PROSITE" id="PS50135">
    <property type="entry name" value="ZF_ZZ_2"/>
    <property type="match status" value="2"/>
</dbReference>
<accession>Q9XHY7</accession>
<accession>A0A0P0V0J4</accession>
<accession>Q0JP42</accession>
<accession>Q1EHS1</accession>
<comment type="function">
    <text evidence="2">Acetyltransferase enzyme. Acetylates histones, giving a specific tag for transcriptional activation.</text>
</comment>
<comment type="catalytic activity">
    <reaction evidence="2">
        <text>L-lysyl-[protein] + acetyl-CoA = N(6)-acetyl-L-lysyl-[protein] + CoA + H(+)</text>
        <dbReference type="Rhea" id="RHEA:45948"/>
        <dbReference type="Rhea" id="RHEA-COMP:9752"/>
        <dbReference type="Rhea" id="RHEA-COMP:10731"/>
        <dbReference type="ChEBI" id="CHEBI:15378"/>
        <dbReference type="ChEBI" id="CHEBI:29969"/>
        <dbReference type="ChEBI" id="CHEBI:57287"/>
        <dbReference type="ChEBI" id="CHEBI:57288"/>
        <dbReference type="ChEBI" id="CHEBI:61930"/>
        <dbReference type="EC" id="2.3.1.48"/>
    </reaction>
</comment>
<comment type="subcellular location">
    <subcellularLocation>
        <location evidence="8">Nucleus</location>
    </subcellularLocation>
</comment>
<comment type="caution">
    <text evidence="8">It is uncertain whether Met-1 or Met-2 is the initiator.</text>
</comment>
<comment type="sequence caution" evidence="8">
    <conflict type="erroneous gene model prediction">
        <sequence resource="EMBL-CDS" id="AAD38279"/>
    </conflict>
</comment>
<comment type="sequence caution" evidence="8">
    <conflict type="erroneous initiation">
        <sequence resource="EMBL-CDS" id="BAE95818"/>
    </conflict>
</comment>
<organism>
    <name type="scientific">Oryza sativa subsp. japonica</name>
    <name type="common">Rice</name>
    <dbReference type="NCBI Taxonomy" id="39947"/>
    <lineage>
        <taxon>Eukaryota</taxon>
        <taxon>Viridiplantae</taxon>
        <taxon>Streptophyta</taxon>
        <taxon>Embryophyta</taxon>
        <taxon>Tracheophyta</taxon>
        <taxon>Spermatophyta</taxon>
        <taxon>Magnoliopsida</taxon>
        <taxon>Liliopsida</taxon>
        <taxon>Poales</taxon>
        <taxon>Poaceae</taxon>
        <taxon>BOP clade</taxon>
        <taxon>Oryzoideae</taxon>
        <taxon>Oryzeae</taxon>
        <taxon>Oryzinae</taxon>
        <taxon>Oryza</taxon>
        <taxon>Oryza sativa</taxon>
    </lineage>
</organism>